<accession>P01504</accession>
<comment type="function">
    <text evidence="1">Main toxin of bee venom with strong hemolytic activity and antimicrobial activity. It has enhancing effects on bee venom phospholipase A2 activity. This amphipathic toxin binds to negatively charged membrane surface and forms pore by inserting into lipid bilayers inducing the leakage of ions and molecules and the enhancement of permeability that ultimately leads to cell lysis. It acts as a voltage-gated pore with higher selectivity for anions over cations. The ion conductance has been shown to be voltage-dependent. Self-association of melittin in membranes is promoted by high ionic strength, but not by the presence of negatively charged lipids. In vivo, intradermal injection into healthy human volunteers produce sharp pain sensation and an inflammatory response. It produces pain by activating primary nociceptor cells directly and indirectly due to its ability to activate plasma membrane phospholipase A2 and its pore-forming activity.</text>
</comment>
<comment type="subunit">
    <text evidence="1">Monomer (in solution and for integration into membranes), homotetramer (in solution and potentially as a toroidal pore in membranes), and potenially homomultimer (as a toroidal pore in membranes).</text>
</comment>
<comment type="subcellular location">
    <subcellularLocation>
        <location evidence="2">Secreted</location>
    </subcellularLocation>
    <subcellularLocation>
        <location evidence="1">Target cell membrane</location>
    </subcellularLocation>
    <text evidence="1">Alpha-helical peptides form toroidal pores in the prey.</text>
</comment>
<comment type="tissue specificity">
    <text evidence="5">Expressed by the venom gland.</text>
</comment>
<comment type="similarity">
    <text evidence="4">Belongs to the melittin family.</text>
</comment>
<comment type="online information" name="Protein Spotlight">
    <link uri="https://www.proteinspotlight.org/back_issues/012"/>
    <text>Why Pooh luvvs hunny - Issue 12 of July 2001</text>
</comment>
<keyword id="KW-0027">Amidation</keyword>
<keyword id="KW-0929">Antimicrobial</keyword>
<keyword id="KW-0204">Cytolysis</keyword>
<keyword id="KW-0903">Direct protein sequencing</keyword>
<keyword id="KW-0291">Formylation</keyword>
<keyword id="KW-0354">Hemolysis</keyword>
<keyword id="KW-0406">Ion transport</keyword>
<keyword id="KW-0472">Membrane</keyword>
<keyword id="KW-0626">Porin</keyword>
<keyword id="KW-0964">Secreted</keyword>
<keyword id="KW-1052">Target cell membrane</keyword>
<keyword id="KW-1053">Target membrane</keyword>
<keyword id="KW-0800">Toxin</keyword>
<keyword id="KW-0812">Transmembrane</keyword>
<keyword id="KW-0813">Transport</keyword>
<dbReference type="PIR" id="A01765">
    <property type="entry name" value="MEHBCF"/>
</dbReference>
<dbReference type="SMR" id="P01504"/>
<dbReference type="TCDB" id="1.C.18.1.2">
    <property type="family name" value="the melittin (melittin) family"/>
</dbReference>
<dbReference type="GO" id="GO:0005576">
    <property type="term" value="C:extracellular region"/>
    <property type="evidence" value="ECO:0007669"/>
    <property type="project" value="UniProtKB-SubCell"/>
</dbReference>
<dbReference type="GO" id="GO:0044218">
    <property type="term" value="C:other organism cell membrane"/>
    <property type="evidence" value="ECO:0007669"/>
    <property type="project" value="UniProtKB-KW"/>
</dbReference>
<dbReference type="GO" id="GO:0046930">
    <property type="term" value="C:pore complex"/>
    <property type="evidence" value="ECO:0007669"/>
    <property type="project" value="UniProtKB-KW"/>
</dbReference>
<dbReference type="GO" id="GO:0015288">
    <property type="term" value="F:porin activity"/>
    <property type="evidence" value="ECO:0007669"/>
    <property type="project" value="UniProtKB-KW"/>
</dbReference>
<dbReference type="GO" id="GO:0004860">
    <property type="term" value="F:protein kinase inhibitor activity"/>
    <property type="evidence" value="ECO:0007669"/>
    <property type="project" value="InterPro"/>
</dbReference>
<dbReference type="GO" id="GO:0090729">
    <property type="term" value="F:toxin activity"/>
    <property type="evidence" value="ECO:0007669"/>
    <property type="project" value="UniProtKB-KW"/>
</dbReference>
<dbReference type="GO" id="GO:0031640">
    <property type="term" value="P:killing of cells of another organism"/>
    <property type="evidence" value="ECO:0007669"/>
    <property type="project" value="UniProtKB-KW"/>
</dbReference>
<dbReference type="GO" id="GO:0006811">
    <property type="term" value="P:monoatomic ion transport"/>
    <property type="evidence" value="ECO:0007669"/>
    <property type="project" value="UniProtKB-KW"/>
</dbReference>
<dbReference type="InterPro" id="IPR002116">
    <property type="entry name" value="Melittin/Api_allergen"/>
</dbReference>
<dbReference type="Pfam" id="PF01372">
    <property type="entry name" value="Melittin"/>
    <property type="match status" value="1"/>
</dbReference>
<sequence length="26" mass="2819">GIGAILKVLATGLPTLISWIKNKRKQ</sequence>
<evidence type="ECO:0000250" key="1">
    <source>
        <dbReference type="UniProtKB" id="P01501"/>
    </source>
</evidence>
<evidence type="ECO:0000269" key="2">
    <source ref="1"/>
</evidence>
<evidence type="ECO:0000303" key="3">
    <source ref="1"/>
</evidence>
<evidence type="ECO:0000305" key="4"/>
<evidence type="ECO:0000305" key="5">
    <source ref="1"/>
</evidence>
<organism>
    <name type="scientific">Apis florea</name>
    <name type="common">Dwarf honeybee</name>
    <dbReference type="NCBI Taxonomy" id="7463"/>
    <lineage>
        <taxon>Eukaryota</taxon>
        <taxon>Metazoa</taxon>
        <taxon>Ecdysozoa</taxon>
        <taxon>Arthropoda</taxon>
        <taxon>Hexapoda</taxon>
        <taxon>Insecta</taxon>
        <taxon>Pterygota</taxon>
        <taxon>Neoptera</taxon>
        <taxon>Endopterygota</taxon>
        <taxon>Hymenoptera</taxon>
        <taxon>Apocrita</taxon>
        <taxon>Aculeata</taxon>
        <taxon>Apoidea</taxon>
        <taxon>Anthophila</taxon>
        <taxon>Apidae</taxon>
        <taxon>Apis</taxon>
    </lineage>
</organism>
<protein>
    <recommendedName>
        <fullName evidence="3">Melittin</fullName>
        <shortName>MEL</shortName>
        <shortName>MLT</shortName>
    </recommendedName>
</protein>
<gene>
    <name type="primary">MELT</name>
</gene>
<name>MEL_APIFL</name>
<feature type="peptide" id="PRO_0000044532" description="Melittin" evidence="2">
    <location>
        <begin position="1"/>
        <end position="26"/>
    </location>
</feature>
<feature type="site" description="Important for the flexibility at the center of the helix, flexibility that is important for the stability of the voltage-gated pore" evidence="1">
    <location>
        <position position="14"/>
    </location>
</feature>
<feature type="modified residue" description="N-formylglycine; partial" evidence="1">
    <location>
        <position position="1"/>
    </location>
</feature>
<feature type="modified residue" description="Glutamine amide" evidence="2">
    <location>
        <position position="26"/>
    </location>
</feature>
<proteinExistence type="evidence at protein level"/>
<reference key="1">
    <citation type="journal article" date="1973" name="FEBS Lett.">
        <title>Structure of melittin isolated from two species of honey bees.</title>
        <authorList>
            <person name="Kreil G."/>
        </authorList>
    </citation>
    <scope>PROTEIN SEQUENCE</scope>
    <scope>AMIDATION AT GLN-26</scope>
    <scope>SUBCELLULAR LOCATION</scope>
</reference>